<evidence type="ECO:0000255" key="1">
    <source>
        <dbReference type="HAMAP-Rule" id="MF_00037"/>
    </source>
</evidence>
<accession>Q5L1H7</accession>
<proteinExistence type="inferred from homology"/>
<reference key="1">
    <citation type="journal article" date="2004" name="Nucleic Acids Res.">
        <title>Thermoadaptation trait revealed by the genome sequence of thermophilic Geobacillus kaustophilus.</title>
        <authorList>
            <person name="Takami H."/>
            <person name="Takaki Y."/>
            <person name="Chee G.-J."/>
            <person name="Nishi S."/>
            <person name="Shimamura S."/>
            <person name="Suzuki H."/>
            <person name="Matsui S."/>
            <person name="Uchiyama I."/>
        </authorList>
    </citation>
    <scope>NUCLEOTIDE SEQUENCE [LARGE SCALE GENOMIC DNA]</scope>
    <source>
        <strain>HTA426</strain>
    </source>
</reference>
<dbReference type="EC" id="1.3.1.98" evidence="1"/>
<dbReference type="EMBL" id="BA000043">
    <property type="protein sequence ID" value="BAD75203.1"/>
    <property type="molecule type" value="Genomic_DNA"/>
</dbReference>
<dbReference type="RefSeq" id="WP_011230419.1">
    <property type="nucleotide sequence ID" value="NC_006510.1"/>
</dbReference>
<dbReference type="SMR" id="Q5L1H7"/>
<dbReference type="STRING" id="235909.GK0918"/>
<dbReference type="KEGG" id="gka:GK0918"/>
<dbReference type="PATRIC" id="fig|235909.7.peg.1007"/>
<dbReference type="eggNOG" id="COG0812">
    <property type="taxonomic scope" value="Bacteria"/>
</dbReference>
<dbReference type="HOGENOM" id="CLU_035304_1_1_9"/>
<dbReference type="UniPathway" id="UPA00219"/>
<dbReference type="Proteomes" id="UP000001172">
    <property type="component" value="Chromosome"/>
</dbReference>
<dbReference type="GO" id="GO:0005829">
    <property type="term" value="C:cytosol"/>
    <property type="evidence" value="ECO:0007669"/>
    <property type="project" value="TreeGrafter"/>
</dbReference>
<dbReference type="GO" id="GO:0071949">
    <property type="term" value="F:FAD binding"/>
    <property type="evidence" value="ECO:0007669"/>
    <property type="project" value="InterPro"/>
</dbReference>
<dbReference type="GO" id="GO:0008762">
    <property type="term" value="F:UDP-N-acetylmuramate dehydrogenase activity"/>
    <property type="evidence" value="ECO:0007669"/>
    <property type="project" value="UniProtKB-UniRule"/>
</dbReference>
<dbReference type="GO" id="GO:0051301">
    <property type="term" value="P:cell division"/>
    <property type="evidence" value="ECO:0007669"/>
    <property type="project" value="UniProtKB-KW"/>
</dbReference>
<dbReference type="GO" id="GO:0071555">
    <property type="term" value="P:cell wall organization"/>
    <property type="evidence" value="ECO:0007669"/>
    <property type="project" value="UniProtKB-KW"/>
</dbReference>
<dbReference type="GO" id="GO:0009252">
    <property type="term" value="P:peptidoglycan biosynthetic process"/>
    <property type="evidence" value="ECO:0007669"/>
    <property type="project" value="UniProtKB-UniRule"/>
</dbReference>
<dbReference type="GO" id="GO:0008360">
    <property type="term" value="P:regulation of cell shape"/>
    <property type="evidence" value="ECO:0007669"/>
    <property type="project" value="UniProtKB-KW"/>
</dbReference>
<dbReference type="Gene3D" id="3.30.465.10">
    <property type="match status" value="1"/>
</dbReference>
<dbReference type="Gene3D" id="3.90.78.10">
    <property type="entry name" value="UDP-N-acetylenolpyruvoylglucosamine reductase, C-terminal domain"/>
    <property type="match status" value="1"/>
</dbReference>
<dbReference type="Gene3D" id="3.30.43.10">
    <property type="entry name" value="Uridine Diphospho-n-acetylenolpyruvylglucosamine Reductase, domain 2"/>
    <property type="match status" value="1"/>
</dbReference>
<dbReference type="HAMAP" id="MF_00037">
    <property type="entry name" value="MurB"/>
    <property type="match status" value="1"/>
</dbReference>
<dbReference type="InterPro" id="IPR016166">
    <property type="entry name" value="FAD-bd_PCMH"/>
</dbReference>
<dbReference type="InterPro" id="IPR036318">
    <property type="entry name" value="FAD-bd_PCMH-like_sf"/>
</dbReference>
<dbReference type="InterPro" id="IPR016167">
    <property type="entry name" value="FAD-bd_PCMH_sub1"/>
</dbReference>
<dbReference type="InterPro" id="IPR016169">
    <property type="entry name" value="FAD-bd_PCMH_sub2"/>
</dbReference>
<dbReference type="InterPro" id="IPR003170">
    <property type="entry name" value="MurB"/>
</dbReference>
<dbReference type="InterPro" id="IPR011601">
    <property type="entry name" value="MurB_C"/>
</dbReference>
<dbReference type="InterPro" id="IPR036635">
    <property type="entry name" value="MurB_C_sf"/>
</dbReference>
<dbReference type="InterPro" id="IPR006094">
    <property type="entry name" value="Oxid_FAD_bind_N"/>
</dbReference>
<dbReference type="NCBIfam" id="TIGR00179">
    <property type="entry name" value="murB"/>
    <property type="match status" value="1"/>
</dbReference>
<dbReference type="NCBIfam" id="NF010480">
    <property type="entry name" value="PRK13905.1"/>
    <property type="match status" value="1"/>
</dbReference>
<dbReference type="PANTHER" id="PTHR21071">
    <property type="entry name" value="UDP-N-ACETYLENOLPYRUVOYLGLUCOSAMINE REDUCTASE"/>
    <property type="match status" value="1"/>
</dbReference>
<dbReference type="PANTHER" id="PTHR21071:SF4">
    <property type="entry name" value="UDP-N-ACETYLENOLPYRUVOYLGLUCOSAMINE REDUCTASE"/>
    <property type="match status" value="1"/>
</dbReference>
<dbReference type="Pfam" id="PF01565">
    <property type="entry name" value="FAD_binding_4"/>
    <property type="match status" value="1"/>
</dbReference>
<dbReference type="Pfam" id="PF02873">
    <property type="entry name" value="MurB_C"/>
    <property type="match status" value="1"/>
</dbReference>
<dbReference type="SUPFAM" id="SSF56176">
    <property type="entry name" value="FAD-binding/transporter-associated domain-like"/>
    <property type="match status" value="1"/>
</dbReference>
<dbReference type="SUPFAM" id="SSF56194">
    <property type="entry name" value="Uridine diphospho-N-Acetylenolpyruvylglucosamine reductase, MurB, C-terminal domain"/>
    <property type="match status" value="1"/>
</dbReference>
<dbReference type="PROSITE" id="PS51387">
    <property type="entry name" value="FAD_PCMH"/>
    <property type="match status" value="1"/>
</dbReference>
<keyword id="KW-0131">Cell cycle</keyword>
<keyword id="KW-0132">Cell division</keyword>
<keyword id="KW-0133">Cell shape</keyword>
<keyword id="KW-0961">Cell wall biogenesis/degradation</keyword>
<keyword id="KW-0963">Cytoplasm</keyword>
<keyword id="KW-0274">FAD</keyword>
<keyword id="KW-0285">Flavoprotein</keyword>
<keyword id="KW-0521">NADP</keyword>
<keyword id="KW-0560">Oxidoreductase</keyword>
<keyword id="KW-0573">Peptidoglycan synthesis</keyword>
<keyword id="KW-1185">Reference proteome</keyword>
<sequence>MEHAEQIYQRLVEICGERNVLRDEPMKNHTLVRIGGKADFLVWPETYEQVIEVLRLKEEYGLPFTLLGNGSNVIIRDGGLRGIVMQLKHLNRIWREGNNVIAQSGADIKAVSRFALEQHLTGLEFACGIPGSVGGAIMMNAGAYGGEVKDVLDHVKVATLSGELKTLKNEELELGYRTSLISRTHDIVLEVVFALRPGDYAQIKAKMDDLTFQRESKQPLEYPSVGSVFKRPPGYFAGKLIQDSGLQGKGFGGAEVSTKHAGFIINKNNATAADYIATIEMVRKTVKEKFGVDLELEVKIIGEE</sequence>
<gene>
    <name evidence="1" type="primary">murB</name>
    <name type="ordered locus">GK0918</name>
</gene>
<feature type="chain" id="PRO_0000224685" description="UDP-N-acetylenolpyruvoylglucosamine reductase">
    <location>
        <begin position="1"/>
        <end position="304"/>
    </location>
</feature>
<feature type="domain" description="FAD-binding PCMH-type" evidence="1">
    <location>
        <begin position="34"/>
        <end position="198"/>
    </location>
</feature>
<feature type="active site" evidence="1">
    <location>
        <position position="177"/>
    </location>
</feature>
<feature type="active site" description="Proton donor" evidence="1">
    <location>
        <position position="227"/>
    </location>
</feature>
<feature type="active site" evidence="1">
    <location>
        <position position="297"/>
    </location>
</feature>
<protein>
    <recommendedName>
        <fullName evidence="1">UDP-N-acetylenolpyruvoylglucosamine reductase</fullName>
        <ecNumber evidence="1">1.3.1.98</ecNumber>
    </recommendedName>
    <alternativeName>
        <fullName evidence="1">UDP-N-acetylmuramate dehydrogenase</fullName>
    </alternativeName>
</protein>
<name>MURB_GEOKA</name>
<comment type="function">
    <text evidence="1">Cell wall formation.</text>
</comment>
<comment type="catalytic activity">
    <reaction evidence="1">
        <text>UDP-N-acetyl-alpha-D-muramate + NADP(+) = UDP-N-acetyl-3-O-(1-carboxyvinyl)-alpha-D-glucosamine + NADPH + H(+)</text>
        <dbReference type="Rhea" id="RHEA:12248"/>
        <dbReference type="ChEBI" id="CHEBI:15378"/>
        <dbReference type="ChEBI" id="CHEBI:57783"/>
        <dbReference type="ChEBI" id="CHEBI:58349"/>
        <dbReference type="ChEBI" id="CHEBI:68483"/>
        <dbReference type="ChEBI" id="CHEBI:70757"/>
        <dbReference type="EC" id="1.3.1.98"/>
    </reaction>
</comment>
<comment type="cofactor">
    <cofactor evidence="1">
        <name>FAD</name>
        <dbReference type="ChEBI" id="CHEBI:57692"/>
    </cofactor>
</comment>
<comment type="pathway">
    <text evidence="1">Cell wall biogenesis; peptidoglycan biosynthesis.</text>
</comment>
<comment type="subcellular location">
    <subcellularLocation>
        <location evidence="1">Cytoplasm</location>
    </subcellularLocation>
</comment>
<comment type="similarity">
    <text evidence="1">Belongs to the MurB family.</text>
</comment>
<organism>
    <name type="scientific">Geobacillus kaustophilus (strain HTA426)</name>
    <dbReference type="NCBI Taxonomy" id="235909"/>
    <lineage>
        <taxon>Bacteria</taxon>
        <taxon>Bacillati</taxon>
        <taxon>Bacillota</taxon>
        <taxon>Bacilli</taxon>
        <taxon>Bacillales</taxon>
        <taxon>Anoxybacillaceae</taxon>
        <taxon>Geobacillus</taxon>
        <taxon>Geobacillus thermoleovorans group</taxon>
    </lineage>
</organism>